<organism>
    <name type="scientific">Carboxydothermus hydrogenoformans (strain ATCC BAA-161 / DSM 6008 / Z-2901)</name>
    <dbReference type="NCBI Taxonomy" id="246194"/>
    <lineage>
        <taxon>Bacteria</taxon>
        <taxon>Bacillati</taxon>
        <taxon>Bacillota</taxon>
        <taxon>Clostridia</taxon>
        <taxon>Thermoanaerobacterales</taxon>
        <taxon>Thermoanaerobacteraceae</taxon>
        <taxon>Carboxydothermus</taxon>
    </lineage>
</organism>
<feature type="chain" id="PRO_1000071783" description="Hydroxyethylthiazole kinase">
    <location>
        <begin position="1"/>
        <end position="267"/>
    </location>
</feature>
<feature type="binding site" evidence="1">
    <location>
        <position position="44"/>
    </location>
    <ligand>
        <name>substrate</name>
    </ligand>
</feature>
<feature type="binding site" evidence="1">
    <location>
        <position position="120"/>
    </location>
    <ligand>
        <name>ATP</name>
        <dbReference type="ChEBI" id="CHEBI:30616"/>
    </ligand>
</feature>
<feature type="binding site" evidence="1">
    <location>
        <position position="165"/>
    </location>
    <ligand>
        <name>ATP</name>
        <dbReference type="ChEBI" id="CHEBI:30616"/>
    </ligand>
</feature>
<feature type="binding site" evidence="1">
    <location>
        <position position="192"/>
    </location>
    <ligand>
        <name>substrate</name>
    </ligand>
</feature>
<sequence length="267" mass="28780">MLNTLWEIREKVRDLSPLVVNLTNNVVTNFTANVLLAAGASPIMSEGVEEADDLVKIANAVVINIGTLHSRQVEYFKKAVYLANKYQKPLLLDPVGLGATTYRNETTFELLNSGNFTLIRGNYGEISFLAGNSAQVKGVDSQTSDFAAENLTEVAKRYKTVVVATGPVDYVIAEGELYLNRTGDIMLQKVTGTGCALTSLIGAFVGVIDEPALAALAALAFYGAASEKARKISAGPGSFLVNFIDSLYNLTKEEFLELTTEKVQGLR</sequence>
<evidence type="ECO:0000255" key="1">
    <source>
        <dbReference type="HAMAP-Rule" id="MF_00228"/>
    </source>
</evidence>
<comment type="function">
    <text evidence="1">Catalyzes the phosphorylation of the hydroxyl group of 4-methyl-5-beta-hydroxyethylthiazole (THZ).</text>
</comment>
<comment type="catalytic activity">
    <reaction evidence="1">
        <text>5-(2-hydroxyethyl)-4-methylthiazole + ATP = 4-methyl-5-(2-phosphooxyethyl)-thiazole + ADP + H(+)</text>
        <dbReference type="Rhea" id="RHEA:24212"/>
        <dbReference type="ChEBI" id="CHEBI:15378"/>
        <dbReference type="ChEBI" id="CHEBI:17957"/>
        <dbReference type="ChEBI" id="CHEBI:30616"/>
        <dbReference type="ChEBI" id="CHEBI:58296"/>
        <dbReference type="ChEBI" id="CHEBI:456216"/>
        <dbReference type="EC" id="2.7.1.50"/>
    </reaction>
</comment>
<comment type="cofactor">
    <cofactor evidence="1">
        <name>Mg(2+)</name>
        <dbReference type="ChEBI" id="CHEBI:18420"/>
    </cofactor>
</comment>
<comment type="pathway">
    <text evidence="1">Cofactor biosynthesis; thiamine diphosphate biosynthesis; 4-methyl-5-(2-phosphoethyl)-thiazole from 5-(2-hydroxyethyl)-4-methylthiazole: step 1/1.</text>
</comment>
<comment type="similarity">
    <text evidence="1">Belongs to the Thz kinase family.</text>
</comment>
<reference key="1">
    <citation type="journal article" date="2005" name="PLoS Genet.">
        <title>Life in hot carbon monoxide: the complete genome sequence of Carboxydothermus hydrogenoformans Z-2901.</title>
        <authorList>
            <person name="Wu M."/>
            <person name="Ren Q."/>
            <person name="Durkin A.S."/>
            <person name="Daugherty S.C."/>
            <person name="Brinkac L.M."/>
            <person name="Dodson R.J."/>
            <person name="Madupu R."/>
            <person name="Sullivan S.A."/>
            <person name="Kolonay J.F."/>
            <person name="Nelson W.C."/>
            <person name="Tallon L.J."/>
            <person name="Jones K.M."/>
            <person name="Ulrich L.E."/>
            <person name="Gonzalez J.M."/>
            <person name="Zhulin I.B."/>
            <person name="Robb F.T."/>
            <person name="Eisen J.A."/>
        </authorList>
    </citation>
    <scope>NUCLEOTIDE SEQUENCE [LARGE SCALE GENOMIC DNA]</scope>
    <source>
        <strain>ATCC BAA-161 / DSM 6008 / Z-2901</strain>
    </source>
</reference>
<dbReference type="EC" id="2.7.1.50" evidence="1"/>
<dbReference type="EMBL" id="CP000141">
    <property type="protein sequence ID" value="ABB13785.1"/>
    <property type="molecule type" value="Genomic_DNA"/>
</dbReference>
<dbReference type="RefSeq" id="WP_011343678.1">
    <property type="nucleotide sequence ID" value="NC_007503.1"/>
</dbReference>
<dbReference type="SMR" id="Q3AE32"/>
<dbReference type="FunCoup" id="Q3AE32">
    <property type="interactions" value="150"/>
</dbReference>
<dbReference type="STRING" id="246194.CHY_0748"/>
<dbReference type="KEGG" id="chy:CHY_0748"/>
<dbReference type="eggNOG" id="COG2145">
    <property type="taxonomic scope" value="Bacteria"/>
</dbReference>
<dbReference type="HOGENOM" id="CLU_019943_0_1_9"/>
<dbReference type="InParanoid" id="Q3AE32"/>
<dbReference type="OrthoDB" id="9778146at2"/>
<dbReference type="UniPathway" id="UPA00060">
    <property type="reaction ID" value="UER00139"/>
</dbReference>
<dbReference type="Proteomes" id="UP000002706">
    <property type="component" value="Chromosome"/>
</dbReference>
<dbReference type="GO" id="GO:0005524">
    <property type="term" value="F:ATP binding"/>
    <property type="evidence" value="ECO:0007669"/>
    <property type="project" value="UniProtKB-UniRule"/>
</dbReference>
<dbReference type="GO" id="GO:0004417">
    <property type="term" value="F:hydroxyethylthiazole kinase activity"/>
    <property type="evidence" value="ECO:0007669"/>
    <property type="project" value="UniProtKB-UniRule"/>
</dbReference>
<dbReference type="GO" id="GO:0000287">
    <property type="term" value="F:magnesium ion binding"/>
    <property type="evidence" value="ECO:0007669"/>
    <property type="project" value="UniProtKB-UniRule"/>
</dbReference>
<dbReference type="GO" id="GO:0009228">
    <property type="term" value="P:thiamine biosynthetic process"/>
    <property type="evidence" value="ECO:0007669"/>
    <property type="project" value="UniProtKB-KW"/>
</dbReference>
<dbReference type="GO" id="GO:0009229">
    <property type="term" value="P:thiamine diphosphate biosynthetic process"/>
    <property type="evidence" value="ECO:0007669"/>
    <property type="project" value="UniProtKB-UniRule"/>
</dbReference>
<dbReference type="CDD" id="cd01170">
    <property type="entry name" value="THZ_kinase"/>
    <property type="match status" value="1"/>
</dbReference>
<dbReference type="Gene3D" id="3.40.1190.20">
    <property type="match status" value="1"/>
</dbReference>
<dbReference type="HAMAP" id="MF_00228">
    <property type="entry name" value="Thz_kinase"/>
    <property type="match status" value="1"/>
</dbReference>
<dbReference type="InterPro" id="IPR000417">
    <property type="entry name" value="Hyethyz_kinase"/>
</dbReference>
<dbReference type="InterPro" id="IPR029056">
    <property type="entry name" value="Ribokinase-like"/>
</dbReference>
<dbReference type="NCBIfam" id="NF006830">
    <property type="entry name" value="PRK09355.1"/>
    <property type="match status" value="1"/>
</dbReference>
<dbReference type="NCBIfam" id="TIGR00694">
    <property type="entry name" value="thiM"/>
    <property type="match status" value="1"/>
</dbReference>
<dbReference type="Pfam" id="PF02110">
    <property type="entry name" value="HK"/>
    <property type="match status" value="1"/>
</dbReference>
<dbReference type="PIRSF" id="PIRSF000513">
    <property type="entry name" value="Thz_kinase"/>
    <property type="match status" value="1"/>
</dbReference>
<dbReference type="PRINTS" id="PR01099">
    <property type="entry name" value="HYETHTZKNASE"/>
</dbReference>
<dbReference type="SUPFAM" id="SSF53613">
    <property type="entry name" value="Ribokinase-like"/>
    <property type="match status" value="1"/>
</dbReference>
<protein>
    <recommendedName>
        <fullName evidence="1">Hydroxyethylthiazole kinase</fullName>
        <ecNumber evidence="1">2.7.1.50</ecNumber>
    </recommendedName>
    <alternativeName>
        <fullName evidence="1">4-methyl-5-beta-hydroxyethylthiazole kinase</fullName>
        <shortName evidence="1">TH kinase</shortName>
        <shortName evidence="1">Thz kinase</shortName>
    </alternativeName>
</protein>
<proteinExistence type="inferred from homology"/>
<accession>Q3AE32</accession>
<keyword id="KW-0067">ATP-binding</keyword>
<keyword id="KW-0418">Kinase</keyword>
<keyword id="KW-0460">Magnesium</keyword>
<keyword id="KW-0479">Metal-binding</keyword>
<keyword id="KW-0547">Nucleotide-binding</keyword>
<keyword id="KW-1185">Reference proteome</keyword>
<keyword id="KW-0784">Thiamine biosynthesis</keyword>
<keyword id="KW-0808">Transferase</keyword>
<name>THIM_CARHZ</name>
<gene>
    <name evidence="1" type="primary">thiM</name>
    <name type="ordered locus">CHY_0748</name>
</gene>